<feature type="chain" id="PRO_0000226188" description="Ketol-acid reductoisomerase (NADP(+))">
    <location>
        <begin position="1"/>
        <end position="331"/>
    </location>
</feature>
<feature type="domain" description="KARI N-terminal Rossmann" evidence="2">
    <location>
        <begin position="2"/>
        <end position="182"/>
    </location>
</feature>
<feature type="domain" description="KARI C-terminal knotted" evidence="3">
    <location>
        <begin position="183"/>
        <end position="328"/>
    </location>
</feature>
<feature type="active site" evidence="1">
    <location>
        <position position="108"/>
    </location>
</feature>
<feature type="binding site" evidence="1">
    <location>
        <begin position="25"/>
        <end position="28"/>
    </location>
    <ligand>
        <name>NADP(+)</name>
        <dbReference type="ChEBI" id="CHEBI:58349"/>
    </ligand>
</feature>
<feature type="binding site" evidence="1">
    <location>
        <position position="51"/>
    </location>
    <ligand>
        <name>NADP(+)</name>
        <dbReference type="ChEBI" id="CHEBI:58349"/>
    </ligand>
</feature>
<feature type="binding site" evidence="1">
    <location>
        <position position="53"/>
    </location>
    <ligand>
        <name>NADP(+)</name>
        <dbReference type="ChEBI" id="CHEBI:58349"/>
    </ligand>
</feature>
<feature type="binding site" evidence="1">
    <location>
        <begin position="83"/>
        <end position="86"/>
    </location>
    <ligand>
        <name>NADP(+)</name>
        <dbReference type="ChEBI" id="CHEBI:58349"/>
    </ligand>
</feature>
<feature type="binding site" evidence="1">
    <location>
        <position position="134"/>
    </location>
    <ligand>
        <name>NADP(+)</name>
        <dbReference type="ChEBI" id="CHEBI:58349"/>
    </ligand>
</feature>
<feature type="binding site" evidence="1">
    <location>
        <position position="191"/>
    </location>
    <ligand>
        <name>Mg(2+)</name>
        <dbReference type="ChEBI" id="CHEBI:18420"/>
        <label>1</label>
    </ligand>
</feature>
<feature type="binding site" evidence="1">
    <location>
        <position position="191"/>
    </location>
    <ligand>
        <name>Mg(2+)</name>
        <dbReference type="ChEBI" id="CHEBI:18420"/>
        <label>2</label>
    </ligand>
</feature>
<feature type="binding site" evidence="1">
    <location>
        <position position="195"/>
    </location>
    <ligand>
        <name>Mg(2+)</name>
        <dbReference type="ChEBI" id="CHEBI:18420"/>
        <label>1</label>
    </ligand>
</feature>
<feature type="binding site" evidence="1">
    <location>
        <position position="227"/>
    </location>
    <ligand>
        <name>Mg(2+)</name>
        <dbReference type="ChEBI" id="CHEBI:18420"/>
        <label>2</label>
    </ligand>
</feature>
<feature type="binding site" evidence="1">
    <location>
        <position position="231"/>
    </location>
    <ligand>
        <name>Mg(2+)</name>
        <dbReference type="ChEBI" id="CHEBI:18420"/>
        <label>2</label>
    </ligand>
</feature>
<feature type="binding site" evidence="1">
    <location>
        <position position="252"/>
    </location>
    <ligand>
        <name>substrate</name>
    </ligand>
</feature>
<dbReference type="EC" id="1.1.1.86" evidence="1"/>
<dbReference type="EMBL" id="CP000095">
    <property type="protein sequence ID" value="AAZ58372.1"/>
    <property type="molecule type" value="Genomic_DNA"/>
</dbReference>
<dbReference type="RefSeq" id="WP_011295229.1">
    <property type="nucleotide sequence ID" value="NC_007335.2"/>
</dbReference>
<dbReference type="SMR" id="Q46JF6"/>
<dbReference type="STRING" id="59920.PMN2A_0881"/>
<dbReference type="KEGG" id="pmn:PMN2A_0881"/>
<dbReference type="HOGENOM" id="CLU_033821_0_1_3"/>
<dbReference type="OrthoDB" id="9804088at2"/>
<dbReference type="PhylomeDB" id="Q46JF6"/>
<dbReference type="UniPathway" id="UPA00047">
    <property type="reaction ID" value="UER00056"/>
</dbReference>
<dbReference type="UniPathway" id="UPA00049">
    <property type="reaction ID" value="UER00060"/>
</dbReference>
<dbReference type="Proteomes" id="UP000002535">
    <property type="component" value="Chromosome"/>
</dbReference>
<dbReference type="GO" id="GO:0005829">
    <property type="term" value="C:cytosol"/>
    <property type="evidence" value="ECO:0007669"/>
    <property type="project" value="TreeGrafter"/>
</dbReference>
<dbReference type="GO" id="GO:0004455">
    <property type="term" value="F:ketol-acid reductoisomerase activity"/>
    <property type="evidence" value="ECO:0007669"/>
    <property type="project" value="UniProtKB-UniRule"/>
</dbReference>
<dbReference type="GO" id="GO:0000287">
    <property type="term" value="F:magnesium ion binding"/>
    <property type="evidence" value="ECO:0007669"/>
    <property type="project" value="UniProtKB-UniRule"/>
</dbReference>
<dbReference type="GO" id="GO:0050661">
    <property type="term" value="F:NADP binding"/>
    <property type="evidence" value="ECO:0007669"/>
    <property type="project" value="InterPro"/>
</dbReference>
<dbReference type="GO" id="GO:0009097">
    <property type="term" value="P:isoleucine biosynthetic process"/>
    <property type="evidence" value="ECO:0007669"/>
    <property type="project" value="UniProtKB-UniRule"/>
</dbReference>
<dbReference type="GO" id="GO:0009099">
    <property type="term" value="P:L-valine biosynthetic process"/>
    <property type="evidence" value="ECO:0007669"/>
    <property type="project" value="UniProtKB-UniRule"/>
</dbReference>
<dbReference type="FunFam" id="3.40.50.720:FF:000023">
    <property type="entry name" value="Ketol-acid reductoisomerase (NADP(+))"/>
    <property type="match status" value="1"/>
</dbReference>
<dbReference type="Gene3D" id="6.10.240.10">
    <property type="match status" value="1"/>
</dbReference>
<dbReference type="Gene3D" id="3.40.50.720">
    <property type="entry name" value="NAD(P)-binding Rossmann-like Domain"/>
    <property type="match status" value="1"/>
</dbReference>
<dbReference type="HAMAP" id="MF_00435">
    <property type="entry name" value="IlvC"/>
    <property type="match status" value="1"/>
</dbReference>
<dbReference type="InterPro" id="IPR008927">
    <property type="entry name" value="6-PGluconate_DH-like_C_sf"/>
</dbReference>
<dbReference type="InterPro" id="IPR013023">
    <property type="entry name" value="KARI"/>
</dbReference>
<dbReference type="InterPro" id="IPR000506">
    <property type="entry name" value="KARI_C"/>
</dbReference>
<dbReference type="InterPro" id="IPR013116">
    <property type="entry name" value="KARI_N"/>
</dbReference>
<dbReference type="InterPro" id="IPR014359">
    <property type="entry name" value="KARI_prok"/>
</dbReference>
<dbReference type="InterPro" id="IPR036291">
    <property type="entry name" value="NAD(P)-bd_dom_sf"/>
</dbReference>
<dbReference type="NCBIfam" id="TIGR00465">
    <property type="entry name" value="ilvC"/>
    <property type="match status" value="1"/>
</dbReference>
<dbReference type="NCBIfam" id="NF004017">
    <property type="entry name" value="PRK05479.1"/>
    <property type="match status" value="1"/>
</dbReference>
<dbReference type="NCBIfam" id="NF009940">
    <property type="entry name" value="PRK13403.1"/>
    <property type="match status" value="1"/>
</dbReference>
<dbReference type="PANTHER" id="PTHR21371">
    <property type="entry name" value="KETOL-ACID REDUCTOISOMERASE, MITOCHONDRIAL"/>
    <property type="match status" value="1"/>
</dbReference>
<dbReference type="PANTHER" id="PTHR21371:SF1">
    <property type="entry name" value="KETOL-ACID REDUCTOISOMERASE, MITOCHONDRIAL"/>
    <property type="match status" value="1"/>
</dbReference>
<dbReference type="Pfam" id="PF01450">
    <property type="entry name" value="KARI_C"/>
    <property type="match status" value="1"/>
</dbReference>
<dbReference type="Pfam" id="PF07991">
    <property type="entry name" value="KARI_N"/>
    <property type="match status" value="1"/>
</dbReference>
<dbReference type="PIRSF" id="PIRSF000116">
    <property type="entry name" value="IlvC_gammaproteo"/>
    <property type="match status" value="1"/>
</dbReference>
<dbReference type="SUPFAM" id="SSF48179">
    <property type="entry name" value="6-phosphogluconate dehydrogenase C-terminal domain-like"/>
    <property type="match status" value="1"/>
</dbReference>
<dbReference type="SUPFAM" id="SSF51735">
    <property type="entry name" value="NAD(P)-binding Rossmann-fold domains"/>
    <property type="match status" value="1"/>
</dbReference>
<dbReference type="PROSITE" id="PS51851">
    <property type="entry name" value="KARI_C"/>
    <property type="match status" value="1"/>
</dbReference>
<dbReference type="PROSITE" id="PS51850">
    <property type="entry name" value="KARI_N"/>
    <property type="match status" value="1"/>
</dbReference>
<proteinExistence type="inferred from homology"/>
<organism>
    <name type="scientific">Prochlorococcus marinus (strain NATL2A)</name>
    <dbReference type="NCBI Taxonomy" id="59920"/>
    <lineage>
        <taxon>Bacteria</taxon>
        <taxon>Bacillati</taxon>
        <taxon>Cyanobacteriota</taxon>
        <taxon>Cyanophyceae</taxon>
        <taxon>Synechococcales</taxon>
        <taxon>Prochlorococcaceae</taxon>
        <taxon>Prochlorococcus</taxon>
    </lineage>
</organism>
<sequence length="331" mass="36310">MAKLFYDSDADLGLLQDKTVAIIGYGSQGHAHALNLKDSGIKVVVGLYEGSRSASKATSDGLEVLSVAEASERADWIMILLPDEFQKDVYSKEIAPHLKAGKILSFAHGFNIRFELIKPPEFVDVVMIAPKGPGHTVRWEYQNGQGVPALFAIEQDSSGNARALAMAYAKGIGGTRAGILETNFKEETETDLFGEQAVLCGGLSELVKAGFETLVEAGYQPELAYFECLHEVKLIVDLMVKGGLTAMRDSISNTAEYGDYVSGPRLITKETKEEMKNILADIQDGTFAKNFVKECDEGKPEMKRIRKKDSELPIEKVGKTLRSMFSWLKSD</sequence>
<keyword id="KW-0028">Amino-acid biosynthesis</keyword>
<keyword id="KW-0100">Branched-chain amino acid biosynthesis</keyword>
<keyword id="KW-0460">Magnesium</keyword>
<keyword id="KW-0479">Metal-binding</keyword>
<keyword id="KW-0521">NADP</keyword>
<keyword id="KW-0560">Oxidoreductase</keyword>
<keyword id="KW-1185">Reference proteome</keyword>
<reference key="1">
    <citation type="journal article" date="2007" name="PLoS Genet.">
        <title>Patterns and implications of gene gain and loss in the evolution of Prochlorococcus.</title>
        <authorList>
            <person name="Kettler G.C."/>
            <person name="Martiny A.C."/>
            <person name="Huang K."/>
            <person name="Zucker J."/>
            <person name="Coleman M.L."/>
            <person name="Rodrigue S."/>
            <person name="Chen F."/>
            <person name="Lapidus A."/>
            <person name="Ferriera S."/>
            <person name="Johnson J."/>
            <person name="Steglich C."/>
            <person name="Church G.M."/>
            <person name="Richardson P."/>
            <person name="Chisholm S.W."/>
        </authorList>
    </citation>
    <scope>NUCLEOTIDE SEQUENCE [LARGE SCALE GENOMIC DNA]</scope>
    <source>
        <strain>NATL2A</strain>
    </source>
</reference>
<evidence type="ECO:0000255" key="1">
    <source>
        <dbReference type="HAMAP-Rule" id="MF_00435"/>
    </source>
</evidence>
<evidence type="ECO:0000255" key="2">
    <source>
        <dbReference type="PROSITE-ProRule" id="PRU01197"/>
    </source>
</evidence>
<evidence type="ECO:0000255" key="3">
    <source>
        <dbReference type="PROSITE-ProRule" id="PRU01198"/>
    </source>
</evidence>
<comment type="function">
    <text evidence="1">Involved in the biosynthesis of branched-chain amino acids (BCAA). Catalyzes an alkyl-migration followed by a ketol-acid reduction of (S)-2-acetolactate (S2AL) to yield (R)-2,3-dihydroxy-isovalerate. In the isomerase reaction, S2AL is rearranged via a Mg-dependent methyl migration to produce 3-hydroxy-3-methyl-2-ketobutyrate (HMKB). In the reductase reaction, this 2-ketoacid undergoes a metal-dependent reduction by NADPH to yield (R)-2,3-dihydroxy-isovalerate.</text>
</comment>
<comment type="catalytic activity">
    <reaction evidence="1">
        <text>(2R)-2,3-dihydroxy-3-methylbutanoate + NADP(+) = (2S)-2-acetolactate + NADPH + H(+)</text>
        <dbReference type="Rhea" id="RHEA:22068"/>
        <dbReference type="ChEBI" id="CHEBI:15378"/>
        <dbReference type="ChEBI" id="CHEBI:49072"/>
        <dbReference type="ChEBI" id="CHEBI:57783"/>
        <dbReference type="ChEBI" id="CHEBI:58349"/>
        <dbReference type="ChEBI" id="CHEBI:58476"/>
        <dbReference type="EC" id="1.1.1.86"/>
    </reaction>
</comment>
<comment type="catalytic activity">
    <reaction evidence="1">
        <text>(2R,3R)-2,3-dihydroxy-3-methylpentanoate + NADP(+) = (S)-2-ethyl-2-hydroxy-3-oxobutanoate + NADPH + H(+)</text>
        <dbReference type="Rhea" id="RHEA:13493"/>
        <dbReference type="ChEBI" id="CHEBI:15378"/>
        <dbReference type="ChEBI" id="CHEBI:49256"/>
        <dbReference type="ChEBI" id="CHEBI:49258"/>
        <dbReference type="ChEBI" id="CHEBI:57783"/>
        <dbReference type="ChEBI" id="CHEBI:58349"/>
        <dbReference type="EC" id="1.1.1.86"/>
    </reaction>
</comment>
<comment type="cofactor">
    <cofactor evidence="1">
        <name>Mg(2+)</name>
        <dbReference type="ChEBI" id="CHEBI:18420"/>
    </cofactor>
    <text evidence="1">Binds 2 magnesium ions per subunit.</text>
</comment>
<comment type="pathway">
    <text evidence="1">Amino-acid biosynthesis; L-isoleucine biosynthesis; L-isoleucine from 2-oxobutanoate: step 2/4.</text>
</comment>
<comment type="pathway">
    <text evidence="1">Amino-acid biosynthesis; L-valine biosynthesis; L-valine from pyruvate: step 2/4.</text>
</comment>
<comment type="similarity">
    <text evidence="1">Belongs to the ketol-acid reductoisomerase family.</text>
</comment>
<gene>
    <name evidence="1" type="primary">ilvC</name>
    <name type="ordered locus">PMN2A_0881</name>
</gene>
<accession>Q46JF6</accession>
<name>ILVC_PROMT</name>
<protein>
    <recommendedName>
        <fullName evidence="1">Ketol-acid reductoisomerase (NADP(+))</fullName>
        <shortName evidence="1">KARI</shortName>
        <ecNumber evidence="1">1.1.1.86</ecNumber>
    </recommendedName>
    <alternativeName>
        <fullName evidence="1">Acetohydroxy-acid isomeroreductase</fullName>
        <shortName evidence="1">AHIR</shortName>
    </alternativeName>
    <alternativeName>
        <fullName evidence="1">Alpha-keto-beta-hydroxylacyl reductoisomerase</fullName>
    </alternativeName>
    <alternativeName>
        <fullName evidence="1">Ketol-acid reductoisomerase type 1</fullName>
    </alternativeName>
    <alternativeName>
        <fullName evidence="1">Ketol-acid reductoisomerase type I</fullName>
    </alternativeName>
</protein>